<feature type="chain" id="PRO_0000140592" description="Chorismate synthase">
    <location>
        <begin position="1"/>
        <end position="360"/>
    </location>
</feature>
<feature type="binding site" evidence="1">
    <location>
        <position position="48"/>
    </location>
    <ligand>
        <name>NADP(+)</name>
        <dbReference type="ChEBI" id="CHEBI:58349"/>
    </ligand>
</feature>
<feature type="binding site" evidence="1">
    <location>
        <position position="54"/>
    </location>
    <ligand>
        <name>NADP(+)</name>
        <dbReference type="ChEBI" id="CHEBI:58349"/>
    </ligand>
</feature>
<feature type="binding site" evidence="1">
    <location>
        <begin position="125"/>
        <end position="127"/>
    </location>
    <ligand>
        <name>FMN</name>
        <dbReference type="ChEBI" id="CHEBI:58210"/>
    </ligand>
</feature>
<feature type="binding site" evidence="1">
    <location>
        <begin position="242"/>
        <end position="243"/>
    </location>
    <ligand>
        <name>FMN</name>
        <dbReference type="ChEBI" id="CHEBI:58210"/>
    </ligand>
</feature>
<feature type="binding site" evidence="1">
    <location>
        <position position="283"/>
    </location>
    <ligand>
        <name>FMN</name>
        <dbReference type="ChEBI" id="CHEBI:58210"/>
    </ligand>
</feature>
<feature type="binding site" evidence="1">
    <location>
        <begin position="298"/>
        <end position="302"/>
    </location>
    <ligand>
        <name>FMN</name>
        <dbReference type="ChEBI" id="CHEBI:58210"/>
    </ligand>
</feature>
<feature type="binding site" evidence="1">
    <location>
        <position position="324"/>
    </location>
    <ligand>
        <name>FMN</name>
        <dbReference type="ChEBI" id="CHEBI:58210"/>
    </ligand>
</feature>
<name>AROC_GLUOX</name>
<evidence type="ECO:0000255" key="1">
    <source>
        <dbReference type="HAMAP-Rule" id="MF_00300"/>
    </source>
</evidence>
<comment type="function">
    <text evidence="1">Catalyzes the anti-1,4-elimination of the C-3 phosphate and the C-6 proR hydrogen from 5-enolpyruvylshikimate-3-phosphate (EPSP) to yield chorismate, which is the branch point compound that serves as the starting substrate for the three terminal pathways of aromatic amino acid biosynthesis. This reaction introduces a second double bond into the aromatic ring system.</text>
</comment>
<comment type="catalytic activity">
    <reaction evidence="1">
        <text>5-O-(1-carboxyvinyl)-3-phosphoshikimate = chorismate + phosphate</text>
        <dbReference type="Rhea" id="RHEA:21020"/>
        <dbReference type="ChEBI" id="CHEBI:29748"/>
        <dbReference type="ChEBI" id="CHEBI:43474"/>
        <dbReference type="ChEBI" id="CHEBI:57701"/>
        <dbReference type="EC" id="4.2.3.5"/>
    </reaction>
</comment>
<comment type="cofactor">
    <cofactor evidence="1">
        <name>FMNH2</name>
        <dbReference type="ChEBI" id="CHEBI:57618"/>
    </cofactor>
    <text evidence="1">Reduced FMN (FMNH(2)).</text>
</comment>
<comment type="pathway">
    <text evidence="1">Metabolic intermediate biosynthesis; chorismate biosynthesis; chorismate from D-erythrose 4-phosphate and phosphoenolpyruvate: step 7/7.</text>
</comment>
<comment type="subunit">
    <text evidence="1">Homotetramer.</text>
</comment>
<comment type="similarity">
    <text evidence="1">Belongs to the chorismate synthase family.</text>
</comment>
<organism>
    <name type="scientific">Gluconobacter oxydans (strain 621H)</name>
    <name type="common">Gluconobacter suboxydans</name>
    <dbReference type="NCBI Taxonomy" id="290633"/>
    <lineage>
        <taxon>Bacteria</taxon>
        <taxon>Pseudomonadati</taxon>
        <taxon>Pseudomonadota</taxon>
        <taxon>Alphaproteobacteria</taxon>
        <taxon>Acetobacterales</taxon>
        <taxon>Acetobacteraceae</taxon>
        <taxon>Gluconobacter</taxon>
    </lineage>
</organism>
<proteinExistence type="inferred from homology"/>
<accession>Q5FPG9</accession>
<dbReference type="EC" id="4.2.3.5" evidence="1"/>
<dbReference type="EMBL" id="CP000009">
    <property type="protein sequence ID" value="AAW61727.1"/>
    <property type="molecule type" value="Genomic_DNA"/>
</dbReference>
<dbReference type="RefSeq" id="WP_011253504.1">
    <property type="nucleotide sequence ID" value="NZ_LT900338.1"/>
</dbReference>
<dbReference type="SMR" id="Q5FPG9"/>
<dbReference type="STRING" id="290633.GOX1991"/>
<dbReference type="GeneID" id="56906328"/>
<dbReference type="KEGG" id="gox:GOX1991"/>
<dbReference type="eggNOG" id="COG0082">
    <property type="taxonomic scope" value="Bacteria"/>
</dbReference>
<dbReference type="HOGENOM" id="CLU_034547_0_0_5"/>
<dbReference type="UniPathway" id="UPA00053">
    <property type="reaction ID" value="UER00090"/>
</dbReference>
<dbReference type="Proteomes" id="UP000006375">
    <property type="component" value="Chromosome"/>
</dbReference>
<dbReference type="GO" id="GO:0005829">
    <property type="term" value="C:cytosol"/>
    <property type="evidence" value="ECO:0007669"/>
    <property type="project" value="TreeGrafter"/>
</dbReference>
<dbReference type="GO" id="GO:0004107">
    <property type="term" value="F:chorismate synthase activity"/>
    <property type="evidence" value="ECO:0007669"/>
    <property type="project" value="UniProtKB-UniRule"/>
</dbReference>
<dbReference type="GO" id="GO:0010181">
    <property type="term" value="F:FMN binding"/>
    <property type="evidence" value="ECO:0007669"/>
    <property type="project" value="TreeGrafter"/>
</dbReference>
<dbReference type="GO" id="GO:0008652">
    <property type="term" value="P:amino acid biosynthetic process"/>
    <property type="evidence" value="ECO:0007669"/>
    <property type="project" value="UniProtKB-KW"/>
</dbReference>
<dbReference type="GO" id="GO:0009073">
    <property type="term" value="P:aromatic amino acid family biosynthetic process"/>
    <property type="evidence" value="ECO:0007669"/>
    <property type="project" value="UniProtKB-KW"/>
</dbReference>
<dbReference type="GO" id="GO:0009423">
    <property type="term" value="P:chorismate biosynthetic process"/>
    <property type="evidence" value="ECO:0007669"/>
    <property type="project" value="UniProtKB-UniRule"/>
</dbReference>
<dbReference type="CDD" id="cd07304">
    <property type="entry name" value="Chorismate_synthase"/>
    <property type="match status" value="1"/>
</dbReference>
<dbReference type="Gene3D" id="3.60.150.10">
    <property type="entry name" value="Chorismate synthase AroC"/>
    <property type="match status" value="1"/>
</dbReference>
<dbReference type="HAMAP" id="MF_00300">
    <property type="entry name" value="Chorismate_synth"/>
    <property type="match status" value="1"/>
</dbReference>
<dbReference type="InterPro" id="IPR000453">
    <property type="entry name" value="Chorismate_synth"/>
</dbReference>
<dbReference type="InterPro" id="IPR035904">
    <property type="entry name" value="Chorismate_synth_AroC_sf"/>
</dbReference>
<dbReference type="InterPro" id="IPR020541">
    <property type="entry name" value="Chorismate_synthase_CS"/>
</dbReference>
<dbReference type="NCBIfam" id="TIGR00033">
    <property type="entry name" value="aroC"/>
    <property type="match status" value="1"/>
</dbReference>
<dbReference type="NCBIfam" id="NF003793">
    <property type="entry name" value="PRK05382.1"/>
    <property type="match status" value="1"/>
</dbReference>
<dbReference type="PANTHER" id="PTHR21085">
    <property type="entry name" value="CHORISMATE SYNTHASE"/>
    <property type="match status" value="1"/>
</dbReference>
<dbReference type="PANTHER" id="PTHR21085:SF0">
    <property type="entry name" value="CHORISMATE SYNTHASE"/>
    <property type="match status" value="1"/>
</dbReference>
<dbReference type="Pfam" id="PF01264">
    <property type="entry name" value="Chorismate_synt"/>
    <property type="match status" value="1"/>
</dbReference>
<dbReference type="PIRSF" id="PIRSF001456">
    <property type="entry name" value="Chorismate_synth"/>
    <property type="match status" value="1"/>
</dbReference>
<dbReference type="SUPFAM" id="SSF103263">
    <property type="entry name" value="Chorismate synthase, AroC"/>
    <property type="match status" value="1"/>
</dbReference>
<dbReference type="PROSITE" id="PS00787">
    <property type="entry name" value="CHORISMATE_SYNTHASE_1"/>
    <property type="match status" value="1"/>
</dbReference>
<dbReference type="PROSITE" id="PS00788">
    <property type="entry name" value="CHORISMATE_SYNTHASE_2"/>
    <property type="match status" value="1"/>
</dbReference>
<dbReference type="PROSITE" id="PS00789">
    <property type="entry name" value="CHORISMATE_SYNTHASE_3"/>
    <property type="match status" value="1"/>
</dbReference>
<keyword id="KW-0028">Amino-acid biosynthesis</keyword>
<keyword id="KW-0057">Aromatic amino acid biosynthesis</keyword>
<keyword id="KW-0274">FAD</keyword>
<keyword id="KW-0285">Flavoprotein</keyword>
<keyword id="KW-0288">FMN</keyword>
<keyword id="KW-0456">Lyase</keyword>
<keyword id="KW-0521">NADP</keyword>
<keyword id="KW-1185">Reference proteome</keyword>
<protein>
    <recommendedName>
        <fullName evidence="1">Chorismate synthase</fullName>
        <shortName evidence="1">CS</shortName>
        <ecNumber evidence="1">4.2.3.5</ecNumber>
    </recommendedName>
    <alternativeName>
        <fullName evidence="1">5-enolpyruvylshikimate-3-phosphate phospholyase</fullName>
    </alternativeName>
</protein>
<gene>
    <name evidence="1" type="primary">aroC</name>
    <name type="ordered locus">GOX1991</name>
</gene>
<reference key="1">
    <citation type="journal article" date="2005" name="Nat. Biotechnol.">
        <title>Complete genome sequence of the acetic acid bacterium Gluconobacter oxydans.</title>
        <authorList>
            <person name="Prust C."/>
            <person name="Hoffmeister M."/>
            <person name="Liesegang H."/>
            <person name="Wiezer A."/>
            <person name="Fricke W.F."/>
            <person name="Ehrenreich A."/>
            <person name="Gottschalk G."/>
            <person name="Deppenmeier U."/>
        </authorList>
    </citation>
    <scope>NUCLEOTIDE SEQUENCE [LARGE SCALE GENOMIC DNA]</scope>
    <source>
        <strain>621H</strain>
    </source>
</reference>
<sequence>MSDNSFGKLFRVTTWGESHGPAIGCVIDGCPPRLKLSEEDIQPWLDRRRPGQSRFTTQRREPDQVRILSGVFEGQTTGTPISLMIENTDQRSKDYGDIATRYRPGHADIAYDMKYGIRDYRGGGRSSARETAMRVAAGAVARVLLRTLVGEGVKIRAALTGIGGQTIDPSRWDWDEVERNPLWCPDAESVGPWEALLDSIRKDGSSIGATVEVVAEGLPAGLGAPVYGKLDADLAGAMMGINGVKGVEIGDGFAVAALRGEQNADPIAPGPQFASNHAGGILGGISTGQPIVARFAIKPTSSILTPVPSITRDGESVEVMTKGRHDPCIGIRAVPVAEAMMACVLADHLLRDHAQCGWGR</sequence>